<keyword id="KW-0963">Cytoplasm</keyword>
<keyword id="KW-0489">Methyltransferase</keyword>
<keyword id="KW-0694">RNA-binding</keyword>
<keyword id="KW-0698">rRNA processing</keyword>
<keyword id="KW-0949">S-adenosyl-L-methionine</keyword>
<keyword id="KW-0808">Transferase</keyword>
<evidence type="ECO:0000255" key="1">
    <source>
        <dbReference type="HAMAP-Rule" id="MF_00607"/>
    </source>
</evidence>
<gene>
    <name evidence="1" type="primary">rsmA</name>
    <name evidence="1" type="synonym">ksgA</name>
    <name type="ordered locus">SPAB_00115</name>
</gene>
<comment type="function">
    <text evidence="1">Specifically dimethylates two adjacent adenosines (A1518 and A1519) in the loop of a conserved hairpin near the 3'-end of 16S rRNA in the 30S particle. May play a critical role in biogenesis of 30S subunits.</text>
</comment>
<comment type="catalytic activity">
    <reaction evidence="1">
        <text>adenosine(1518)/adenosine(1519) in 16S rRNA + 4 S-adenosyl-L-methionine = N(6)-dimethyladenosine(1518)/N(6)-dimethyladenosine(1519) in 16S rRNA + 4 S-adenosyl-L-homocysteine + 4 H(+)</text>
        <dbReference type="Rhea" id="RHEA:19609"/>
        <dbReference type="Rhea" id="RHEA-COMP:10232"/>
        <dbReference type="Rhea" id="RHEA-COMP:10233"/>
        <dbReference type="ChEBI" id="CHEBI:15378"/>
        <dbReference type="ChEBI" id="CHEBI:57856"/>
        <dbReference type="ChEBI" id="CHEBI:59789"/>
        <dbReference type="ChEBI" id="CHEBI:74411"/>
        <dbReference type="ChEBI" id="CHEBI:74493"/>
        <dbReference type="EC" id="2.1.1.182"/>
    </reaction>
</comment>
<comment type="subcellular location">
    <subcellularLocation>
        <location evidence="1">Cytoplasm</location>
    </subcellularLocation>
</comment>
<comment type="similarity">
    <text evidence="1">Belongs to the class I-like SAM-binding methyltransferase superfamily. rRNA adenine N(6)-methyltransferase family. RsmA subfamily.</text>
</comment>
<accession>A9MYM4</accession>
<organism>
    <name type="scientific">Salmonella paratyphi B (strain ATCC BAA-1250 / SPB7)</name>
    <dbReference type="NCBI Taxonomy" id="1016998"/>
    <lineage>
        <taxon>Bacteria</taxon>
        <taxon>Pseudomonadati</taxon>
        <taxon>Pseudomonadota</taxon>
        <taxon>Gammaproteobacteria</taxon>
        <taxon>Enterobacterales</taxon>
        <taxon>Enterobacteriaceae</taxon>
        <taxon>Salmonella</taxon>
    </lineage>
</organism>
<reference key="1">
    <citation type="submission" date="2007-11" db="EMBL/GenBank/DDBJ databases">
        <authorList>
            <consortium name="The Salmonella enterica serovar Paratyphi B Genome Sequencing Project"/>
            <person name="McClelland M."/>
            <person name="Sanderson E.K."/>
            <person name="Porwollik S."/>
            <person name="Spieth J."/>
            <person name="Clifton W.S."/>
            <person name="Fulton R."/>
            <person name="Cordes M."/>
            <person name="Wollam A."/>
            <person name="Shah N."/>
            <person name="Pepin K."/>
            <person name="Bhonagiri V."/>
            <person name="Nash W."/>
            <person name="Johnson M."/>
            <person name="Thiruvilangam P."/>
            <person name="Wilson R."/>
        </authorList>
    </citation>
    <scope>NUCLEOTIDE SEQUENCE [LARGE SCALE GENOMIC DNA]</scope>
    <source>
        <strain>ATCC BAA-1250 / SPB7</strain>
    </source>
</reference>
<sequence>MNNRVHQGHLARKRFGQNFLNDRFVIDSIVSAINPQKGQAMVEIGPGLAALTEPVGERLDKLTVIELDRDLAARLQTHPFLGPKLTIYQQDAMTMNFGELSAQLGQPLRVFGNLPYNISTPLMFHLFSYTDAIADMHFMLQKEVVNRLVAGPNSKAYGRLSVMAQYYCQVIPVLEVPPSAFTPPPKVDSAVVRLVPHATMPYPVKDIRVLSRITTEAFNQRRKTIRNSLGNLFSVETLTEMGIDPAMRAENISVAQYCQMANYLSENAPLKES</sequence>
<protein>
    <recommendedName>
        <fullName evidence="1">Ribosomal RNA small subunit methyltransferase A</fullName>
        <ecNumber evidence="1">2.1.1.182</ecNumber>
    </recommendedName>
    <alternativeName>
        <fullName evidence="1">16S rRNA (adenine(1518)-N(6)/adenine(1519)-N(6))-dimethyltransferase</fullName>
    </alternativeName>
    <alternativeName>
        <fullName evidence="1">16S rRNA dimethyladenosine transferase</fullName>
    </alternativeName>
    <alternativeName>
        <fullName evidence="1">16S rRNA dimethylase</fullName>
    </alternativeName>
    <alternativeName>
        <fullName evidence="1">S-adenosylmethionine-6-N', N'-adenosyl(rRNA) dimethyltransferase</fullName>
    </alternativeName>
</protein>
<name>RSMA_SALPB</name>
<proteinExistence type="inferred from homology"/>
<feature type="chain" id="PRO_1000082559" description="Ribosomal RNA small subunit methyltransferase A">
    <location>
        <begin position="1"/>
        <end position="273"/>
    </location>
</feature>
<feature type="binding site" evidence="1">
    <location>
        <position position="18"/>
    </location>
    <ligand>
        <name>S-adenosyl-L-methionine</name>
        <dbReference type="ChEBI" id="CHEBI:59789"/>
    </ligand>
</feature>
<feature type="binding site" evidence="1">
    <location>
        <position position="20"/>
    </location>
    <ligand>
        <name>S-adenosyl-L-methionine</name>
        <dbReference type="ChEBI" id="CHEBI:59789"/>
    </ligand>
</feature>
<feature type="binding site" evidence="1">
    <location>
        <position position="45"/>
    </location>
    <ligand>
        <name>S-adenosyl-L-methionine</name>
        <dbReference type="ChEBI" id="CHEBI:59789"/>
    </ligand>
</feature>
<feature type="binding site" evidence="1">
    <location>
        <position position="66"/>
    </location>
    <ligand>
        <name>S-adenosyl-L-methionine</name>
        <dbReference type="ChEBI" id="CHEBI:59789"/>
    </ligand>
</feature>
<feature type="binding site" evidence="1">
    <location>
        <position position="91"/>
    </location>
    <ligand>
        <name>S-adenosyl-L-methionine</name>
        <dbReference type="ChEBI" id="CHEBI:59789"/>
    </ligand>
</feature>
<feature type="binding site" evidence="1">
    <location>
        <position position="113"/>
    </location>
    <ligand>
        <name>S-adenosyl-L-methionine</name>
        <dbReference type="ChEBI" id="CHEBI:59789"/>
    </ligand>
</feature>
<dbReference type="EC" id="2.1.1.182" evidence="1"/>
<dbReference type="EMBL" id="CP000886">
    <property type="protein sequence ID" value="ABX65558.1"/>
    <property type="molecule type" value="Genomic_DNA"/>
</dbReference>
<dbReference type="RefSeq" id="WP_001065397.1">
    <property type="nucleotide sequence ID" value="NC_010102.1"/>
</dbReference>
<dbReference type="SMR" id="A9MYM4"/>
<dbReference type="KEGG" id="spq:SPAB_00115"/>
<dbReference type="PATRIC" id="fig|1016998.12.peg.109"/>
<dbReference type="HOGENOM" id="CLU_041220_0_1_6"/>
<dbReference type="BioCyc" id="SENT1016998:SPAB_RS00450-MONOMER"/>
<dbReference type="Proteomes" id="UP000008556">
    <property type="component" value="Chromosome"/>
</dbReference>
<dbReference type="GO" id="GO:0005829">
    <property type="term" value="C:cytosol"/>
    <property type="evidence" value="ECO:0007669"/>
    <property type="project" value="TreeGrafter"/>
</dbReference>
<dbReference type="GO" id="GO:0052908">
    <property type="term" value="F:16S rRNA (adenine(1518)-N(6)/adenine(1519)-N(6))-dimethyltransferase activity"/>
    <property type="evidence" value="ECO:0007669"/>
    <property type="project" value="UniProtKB-EC"/>
</dbReference>
<dbReference type="GO" id="GO:0003723">
    <property type="term" value="F:RNA binding"/>
    <property type="evidence" value="ECO:0007669"/>
    <property type="project" value="UniProtKB-KW"/>
</dbReference>
<dbReference type="FunFam" id="1.10.8.100:FF:000001">
    <property type="entry name" value="Ribosomal RNA small subunit methyltransferase A"/>
    <property type="match status" value="1"/>
</dbReference>
<dbReference type="FunFam" id="3.40.50.150:FF:000006">
    <property type="entry name" value="Ribosomal RNA small subunit methyltransferase A"/>
    <property type="match status" value="1"/>
</dbReference>
<dbReference type="Gene3D" id="1.10.8.100">
    <property type="entry name" value="Ribosomal RNA adenine dimethylase-like, domain 2"/>
    <property type="match status" value="1"/>
</dbReference>
<dbReference type="Gene3D" id="3.40.50.150">
    <property type="entry name" value="Vaccinia Virus protein VP39"/>
    <property type="match status" value="1"/>
</dbReference>
<dbReference type="HAMAP" id="MF_00607">
    <property type="entry name" value="16SrRNA_methyltr_A"/>
    <property type="match status" value="1"/>
</dbReference>
<dbReference type="InterPro" id="IPR001737">
    <property type="entry name" value="KsgA/Erm"/>
</dbReference>
<dbReference type="InterPro" id="IPR023165">
    <property type="entry name" value="rRNA_Ade_diMease-like_C"/>
</dbReference>
<dbReference type="InterPro" id="IPR020596">
    <property type="entry name" value="rRNA_Ade_Mease_Trfase_CS"/>
</dbReference>
<dbReference type="InterPro" id="IPR020598">
    <property type="entry name" value="rRNA_Ade_methylase_Trfase_N"/>
</dbReference>
<dbReference type="InterPro" id="IPR011530">
    <property type="entry name" value="rRNA_adenine_dimethylase"/>
</dbReference>
<dbReference type="InterPro" id="IPR029063">
    <property type="entry name" value="SAM-dependent_MTases_sf"/>
</dbReference>
<dbReference type="NCBIfam" id="TIGR00755">
    <property type="entry name" value="ksgA"/>
    <property type="match status" value="1"/>
</dbReference>
<dbReference type="PANTHER" id="PTHR11727">
    <property type="entry name" value="DIMETHYLADENOSINE TRANSFERASE"/>
    <property type="match status" value="1"/>
</dbReference>
<dbReference type="PANTHER" id="PTHR11727:SF7">
    <property type="entry name" value="DIMETHYLADENOSINE TRANSFERASE-RELATED"/>
    <property type="match status" value="1"/>
</dbReference>
<dbReference type="Pfam" id="PF00398">
    <property type="entry name" value="RrnaAD"/>
    <property type="match status" value="1"/>
</dbReference>
<dbReference type="SMART" id="SM00650">
    <property type="entry name" value="rADc"/>
    <property type="match status" value="1"/>
</dbReference>
<dbReference type="SUPFAM" id="SSF53335">
    <property type="entry name" value="S-adenosyl-L-methionine-dependent methyltransferases"/>
    <property type="match status" value="1"/>
</dbReference>
<dbReference type="PROSITE" id="PS01131">
    <property type="entry name" value="RRNA_A_DIMETH"/>
    <property type="match status" value="1"/>
</dbReference>
<dbReference type="PROSITE" id="PS51689">
    <property type="entry name" value="SAM_RNA_A_N6_MT"/>
    <property type="match status" value="1"/>
</dbReference>